<sequence length="360" mass="40517">MKPSIVAKLEALHERHEEVQALLGDAQTIADQERFRALSREYAQLSDVSRCFTDWQQVQEDIETAQMMLDDPEMREMAQDELREAKEKSEQLEQQLQVLLLPKDPDDERNAFLEVRAGTGGDEAALFAGDLFRMYSRYAEARRWRVEIMSASEGEHGGYKEIIAKISGDGVYGRLKFESGGHRVQRVPATESQGRIHTSACTVAVMPELPDAELPDINPADLRIDTFRSSGAGGQHVNTTDSAIRITHLPTGIVVECQDERSQHKNKAKALSVLGARIHAAEMAKRQQAEASTRRNLLGSGDRSDRNRTYNFPQGRVTDHRINLTLYRLDEVMEGKLDMLIEPIIQEHQADQLAALSEQE</sequence>
<proteinExistence type="inferred from homology"/>
<reference key="1">
    <citation type="submission" date="2008-02" db="EMBL/GenBank/DDBJ databases">
        <title>Complete sequence of Escherichia coli C str. ATCC 8739.</title>
        <authorList>
            <person name="Copeland A."/>
            <person name="Lucas S."/>
            <person name="Lapidus A."/>
            <person name="Glavina del Rio T."/>
            <person name="Dalin E."/>
            <person name="Tice H."/>
            <person name="Bruce D."/>
            <person name="Goodwin L."/>
            <person name="Pitluck S."/>
            <person name="Kiss H."/>
            <person name="Brettin T."/>
            <person name="Detter J.C."/>
            <person name="Han C."/>
            <person name="Kuske C.R."/>
            <person name="Schmutz J."/>
            <person name="Larimer F."/>
            <person name="Land M."/>
            <person name="Hauser L."/>
            <person name="Kyrpides N."/>
            <person name="Mikhailova N."/>
            <person name="Ingram L."/>
            <person name="Richardson P."/>
        </authorList>
    </citation>
    <scope>NUCLEOTIDE SEQUENCE [LARGE SCALE GENOMIC DNA]</scope>
    <source>
        <strain>ATCC 8739 / DSM 1576 / NBRC 3972 / NCIMB 8545 / WDCM 00012 / Crooks</strain>
    </source>
</reference>
<protein>
    <recommendedName>
        <fullName evidence="1">Peptide chain release factor 1</fullName>
        <shortName evidence="1">RF-1</shortName>
    </recommendedName>
</protein>
<organism>
    <name type="scientific">Escherichia coli (strain ATCC 8739 / DSM 1576 / NBRC 3972 / NCIMB 8545 / WDCM 00012 / Crooks)</name>
    <dbReference type="NCBI Taxonomy" id="481805"/>
    <lineage>
        <taxon>Bacteria</taxon>
        <taxon>Pseudomonadati</taxon>
        <taxon>Pseudomonadota</taxon>
        <taxon>Gammaproteobacteria</taxon>
        <taxon>Enterobacterales</taxon>
        <taxon>Enterobacteriaceae</taxon>
        <taxon>Escherichia</taxon>
    </lineage>
</organism>
<evidence type="ECO:0000255" key="1">
    <source>
        <dbReference type="HAMAP-Rule" id="MF_00093"/>
    </source>
</evidence>
<evidence type="ECO:0000256" key="2">
    <source>
        <dbReference type="SAM" id="MobiDB-lite"/>
    </source>
</evidence>
<gene>
    <name evidence="1" type="primary">prfA</name>
    <name type="ordered locus">EcolC_2415</name>
</gene>
<feature type="chain" id="PRO_1000075495" description="Peptide chain release factor 1">
    <location>
        <begin position="1"/>
        <end position="360"/>
    </location>
</feature>
<feature type="region of interest" description="Disordered" evidence="2">
    <location>
        <begin position="284"/>
        <end position="313"/>
    </location>
</feature>
<feature type="modified residue" description="N5-methylglutamine" evidence="1">
    <location>
        <position position="235"/>
    </location>
</feature>
<accession>B1IU82</accession>
<dbReference type="EMBL" id="CP000946">
    <property type="protein sequence ID" value="ACA78049.1"/>
    <property type="molecule type" value="Genomic_DNA"/>
</dbReference>
<dbReference type="RefSeq" id="WP_000804726.1">
    <property type="nucleotide sequence ID" value="NZ_MTFT01000016.1"/>
</dbReference>
<dbReference type="SMR" id="B1IU82"/>
<dbReference type="GeneID" id="93775276"/>
<dbReference type="KEGG" id="ecl:EcolC_2415"/>
<dbReference type="HOGENOM" id="CLU_036856_0_1_6"/>
<dbReference type="GO" id="GO:0005737">
    <property type="term" value="C:cytoplasm"/>
    <property type="evidence" value="ECO:0007669"/>
    <property type="project" value="UniProtKB-SubCell"/>
</dbReference>
<dbReference type="GO" id="GO:0016149">
    <property type="term" value="F:translation release factor activity, codon specific"/>
    <property type="evidence" value="ECO:0007669"/>
    <property type="project" value="UniProtKB-UniRule"/>
</dbReference>
<dbReference type="FunFam" id="3.30.160.20:FF:000004">
    <property type="entry name" value="Peptide chain release factor 1"/>
    <property type="match status" value="1"/>
</dbReference>
<dbReference type="FunFam" id="3.30.70.1660:FF:000002">
    <property type="entry name" value="Peptide chain release factor 1"/>
    <property type="match status" value="1"/>
</dbReference>
<dbReference type="FunFam" id="3.30.70.1660:FF:000004">
    <property type="entry name" value="Peptide chain release factor 1"/>
    <property type="match status" value="1"/>
</dbReference>
<dbReference type="Gene3D" id="3.30.160.20">
    <property type="match status" value="1"/>
</dbReference>
<dbReference type="Gene3D" id="3.30.70.1660">
    <property type="match status" value="1"/>
</dbReference>
<dbReference type="Gene3D" id="6.10.140.1950">
    <property type="match status" value="1"/>
</dbReference>
<dbReference type="HAMAP" id="MF_00093">
    <property type="entry name" value="Rel_fac_1"/>
    <property type="match status" value="1"/>
</dbReference>
<dbReference type="InterPro" id="IPR005139">
    <property type="entry name" value="PCRF"/>
</dbReference>
<dbReference type="InterPro" id="IPR000352">
    <property type="entry name" value="Pep_chain_release_fac_I"/>
</dbReference>
<dbReference type="InterPro" id="IPR045853">
    <property type="entry name" value="Pep_chain_release_fac_I_sf"/>
</dbReference>
<dbReference type="InterPro" id="IPR050057">
    <property type="entry name" value="Prokaryotic/Mito_RF"/>
</dbReference>
<dbReference type="InterPro" id="IPR004373">
    <property type="entry name" value="RF-1"/>
</dbReference>
<dbReference type="NCBIfam" id="TIGR00019">
    <property type="entry name" value="prfA"/>
    <property type="match status" value="1"/>
</dbReference>
<dbReference type="NCBIfam" id="NF001859">
    <property type="entry name" value="PRK00591.1"/>
    <property type="match status" value="1"/>
</dbReference>
<dbReference type="PANTHER" id="PTHR43804">
    <property type="entry name" value="LD18447P"/>
    <property type="match status" value="1"/>
</dbReference>
<dbReference type="PANTHER" id="PTHR43804:SF7">
    <property type="entry name" value="LD18447P"/>
    <property type="match status" value="1"/>
</dbReference>
<dbReference type="Pfam" id="PF03462">
    <property type="entry name" value="PCRF"/>
    <property type="match status" value="1"/>
</dbReference>
<dbReference type="Pfam" id="PF00472">
    <property type="entry name" value="RF-1"/>
    <property type="match status" value="1"/>
</dbReference>
<dbReference type="SMART" id="SM00937">
    <property type="entry name" value="PCRF"/>
    <property type="match status" value="1"/>
</dbReference>
<dbReference type="SUPFAM" id="SSF75620">
    <property type="entry name" value="Release factor"/>
    <property type="match status" value="1"/>
</dbReference>
<dbReference type="PROSITE" id="PS00745">
    <property type="entry name" value="RF_PROK_I"/>
    <property type="match status" value="1"/>
</dbReference>
<keyword id="KW-0963">Cytoplasm</keyword>
<keyword id="KW-0488">Methylation</keyword>
<keyword id="KW-0648">Protein biosynthesis</keyword>
<name>RF1_ECOLC</name>
<comment type="function">
    <text evidence="1">Peptide chain release factor 1 directs the termination of translation in response to the peptide chain termination codons UAG and UAA.</text>
</comment>
<comment type="subcellular location">
    <subcellularLocation>
        <location evidence="1">Cytoplasm</location>
    </subcellularLocation>
</comment>
<comment type="PTM">
    <text evidence="1">Methylated by PrmC. Methylation increases the termination efficiency of RF1.</text>
</comment>
<comment type="similarity">
    <text evidence="1">Belongs to the prokaryotic/mitochondrial release factor family.</text>
</comment>